<protein>
    <recommendedName>
        <fullName evidence="1">Large ribosomal subunit protein bL12</fullName>
    </recommendedName>
    <alternativeName>
        <fullName evidence="2">50S ribosomal protein L7/L12</fullName>
    </alternativeName>
</protein>
<feature type="chain" id="PRO_0000157551" description="Large ribosomal subunit protein bL12">
    <location>
        <begin position="1"/>
        <end position="130"/>
    </location>
</feature>
<gene>
    <name evidence="1" type="primary">rplL</name>
    <name type="ordered locus">BQ2027_MB0671</name>
</gene>
<accession>P0A5V3</accession>
<accession>A0A1R3XW01</accession>
<accession>P37381</accession>
<accession>X2BFS4</accession>
<evidence type="ECO:0000255" key="1">
    <source>
        <dbReference type="HAMAP-Rule" id="MF_00368"/>
    </source>
</evidence>
<evidence type="ECO:0000305" key="2"/>
<name>RL7_MYCBO</name>
<reference key="1">
    <citation type="journal article" date="1993" name="Nucleic Acids Res.">
        <title>Cloning and sequencing of the gene encoding the ribosomal L7/L12-like protein of Mycobacterium bovis BCG.</title>
        <authorList>
            <person name="Ohara N."/>
            <person name="Kimura M."/>
            <person name="Wada N."/>
            <person name="Yamada T."/>
        </authorList>
    </citation>
    <scope>NUCLEOTIDE SEQUENCE [GENOMIC DNA]</scope>
    <source>
        <strain>BCG / Tokyo</strain>
    </source>
</reference>
<reference key="2">
    <citation type="journal article" date="2003" name="Proc. Natl. Acad. Sci. U.S.A.">
        <title>The complete genome sequence of Mycobacterium bovis.</title>
        <authorList>
            <person name="Garnier T."/>
            <person name="Eiglmeier K."/>
            <person name="Camus J.-C."/>
            <person name="Medina N."/>
            <person name="Mansoor H."/>
            <person name="Pryor M."/>
            <person name="Duthoy S."/>
            <person name="Grondin S."/>
            <person name="Lacroix C."/>
            <person name="Monsempe C."/>
            <person name="Simon S."/>
            <person name="Harris B."/>
            <person name="Atkin R."/>
            <person name="Doggett J."/>
            <person name="Mayes R."/>
            <person name="Keating L."/>
            <person name="Wheeler P.R."/>
            <person name="Parkhill J."/>
            <person name="Barrell B.G."/>
            <person name="Cole S.T."/>
            <person name="Gordon S.V."/>
            <person name="Hewinson R.G."/>
        </authorList>
    </citation>
    <scope>NUCLEOTIDE SEQUENCE [LARGE SCALE GENOMIC DNA]</scope>
    <source>
        <strain>ATCC BAA-935 / AF2122/97</strain>
    </source>
</reference>
<reference key="3">
    <citation type="journal article" date="2017" name="Genome Announc.">
        <title>Updated reference genome sequence and annotation of Mycobacterium bovis AF2122/97.</title>
        <authorList>
            <person name="Malone K.M."/>
            <person name="Farrell D."/>
            <person name="Stuber T.P."/>
            <person name="Schubert O.T."/>
            <person name="Aebersold R."/>
            <person name="Robbe-Austerman S."/>
            <person name="Gordon S.V."/>
        </authorList>
    </citation>
    <scope>NUCLEOTIDE SEQUENCE [LARGE SCALE GENOMIC DNA]</scope>
    <scope>GENOME REANNOTATION</scope>
    <source>
        <strain>ATCC BAA-935 / AF2122/97</strain>
    </source>
</reference>
<comment type="function">
    <text evidence="1">Forms part of the ribosomal stalk which helps the ribosome interact with GTP-bound translation factors. Is thus essential for accurate translation.</text>
</comment>
<comment type="subunit">
    <text evidence="1">Homodimer. Part of the ribosomal stalk of the 50S ribosomal subunit. Forms a multimeric L10(L12)X complex, where L10 forms an elongated spine to which 2 to 4 L12 dimers bind in a sequential fashion. Binds GTP-bound translation factors.</text>
</comment>
<comment type="similarity">
    <text evidence="1">Belongs to the bacterial ribosomal protein bL12 family.</text>
</comment>
<sequence length="130" mass="13440">MAKLSTDELLDAFKEMTLLELSDFVKKFEETFEVTAAAPVAVAAAGAAPAGAAVEAAEEQSEFDVILEAAGDKKIGVIKVVREIVSGLGLKEAKDLVDGAPKPLLEKVAKEAADEAKAKLEAAGATVTVK</sequence>
<dbReference type="EMBL" id="D16310">
    <property type="protein sequence ID" value="BAA03817.1"/>
    <property type="molecule type" value="Genomic_DNA"/>
</dbReference>
<dbReference type="EMBL" id="LT708304">
    <property type="protein sequence ID" value="SIT99269.1"/>
    <property type="molecule type" value="Genomic_DNA"/>
</dbReference>
<dbReference type="PIR" id="S41123">
    <property type="entry name" value="S41123"/>
</dbReference>
<dbReference type="RefSeq" id="NP_854329.1">
    <property type="nucleotide sequence ID" value="NC_002945.3"/>
</dbReference>
<dbReference type="RefSeq" id="WP_003403353.1">
    <property type="nucleotide sequence ID" value="NC_002945.4"/>
</dbReference>
<dbReference type="SMR" id="P0A5V3"/>
<dbReference type="GeneID" id="45424612"/>
<dbReference type="KEGG" id="mbo:BQ2027_MB0671"/>
<dbReference type="PATRIC" id="fig|233413.5.peg.731"/>
<dbReference type="Proteomes" id="UP000001419">
    <property type="component" value="Chromosome"/>
</dbReference>
<dbReference type="GO" id="GO:0022625">
    <property type="term" value="C:cytosolic large ribosomal subunit"/>
    <property type="evidence" value="ECO:0007669"/>
    <property type="project" value="TreeGrafter"/>
</dbReference>
<dbReference type="GO" id="GO:0003729">
    <property type="term" value="F:mRNA binding"/>
    <property type="evidence" value="ECO:0007669"/>
    <property type="project" value="TreeGrafter"/>
</dbReference>
<dbReference type="GO" id="GO:0003735">
    <property type="term" value="F:structural constituent of ribosome"/>
    <property type="evidence" value="ECO:0007669"/>
    <property type="project" value="InterPro"/>
</dbReference>
<dbReference type="GO" id="GO:0006412">
    <property type="term" value="P:translation"/>
    <property type="evidence" value="ECO:0007669"/>
    <property type="project" value="UniProtKB-UniRule"/>
</dbReference>
<dbReference type="CDD" id="cd00387">
    <property type="entry name" value="Ribosomal_L7_L12"/>
    <property type="match status" value="1"/>
</dbReference>
<dbReference type="FunFam" id="1.20.5.710:FF:000005">
    <property type="entry name" value="50S ribosomal protein L7/L12"/>
    <property type="match status" value="1"/>
</dbReference>
<dbReference type="FunFam" id="3.30.1390.10:FF:000001">
    <property type="entry name" value="50S ribosomal protein L7/L12"/>
    <property type="match status" value="1"/>
</dbReference>
<dbReference type="Gene3D" id="3.30.1390.10">
    <property type="match status" value="1"/>
</dbReference>
<dbReference type="Gene3D" id="1.20.5.710">
    <property type="entry name" value="Single helix bin"/>
    <property type="match status" value="1"/>
</dbReference>
<dbReference type="HAMAP" id="MF_00368">
    <property type="entry name" value="Ribosomal_bL12"/>
    <property type="match status" value="1"/>
</dbReference>
<dbReference type="InterPro" id="IPR000206">
    <property type="entry name" value="Ribosomal_bL12"/>
</dbReference>
<dbReference type="InterPro" id="IPR013823">
    <property type="entry name" value="Ribosomal_bL12_C"/>
</dbReference>
<dbReference type="InterPro" id="IPR014719">
    <property type="entry name" value="Ribosomal_bL12_C/ClpS-like"/>
</dbReference>
<dbReference type="InterPro" id="IPR008932">
    <property type="entry name" value="Ribosomal_bL12_oligo"/>
</dbReference>
<dbReference type="InterPro" id="IPR036235">
    <property type="entry name" value="Ribosomal_bL12_oligo_N_sf"/>
</dbReference>
<dbReference type="NCBIfam" id="TIGR00855">
    <property type="entry name" value="L12"/>
    <property type="match status" value="1"/>
</dbReference>
<dbReference type="PANTHER" id="PTHR45987">
    <property type="entry name" value="39S RIBOSOMAL PROTEIN L12"/>
    <property type="match status" value="1"/>
</dbReference>
<dbReference type="PANTHER" id="PTHR45987:SF4">
    <property type="entry name" value="LARGE RIBOSOMAL SUBUNIT PROTEIN BL12M"/>
    <property type="match status" value="1"/>
</dbReference>
<dbReference type="Pfam" id="PF00542">
    <property type="entry name" value="Ribosomal_L12"/>
    <property type="match status" value="1"/>
</dbReference>
<dbReference type="Pfam" id="PF16320">
    <property type="entry name" value="Ribosomal_L12_N"/>
    <property type="match status" value="1"/>
</dbReference>
<dbReference type="SUPFAM" id="SSF54736">
    <property type="entry name" value="ClpS-like"/>
    <property type="match status" value="1"/>
</dbReference>
<dbReference type="SUPFAM" id="SSF48300">
    <property type="entry name" value="Ribosomal protein L7/12, oligomerisation (N-terminal) domain"/>
    <property type="match status" value="1"/>
</dbReference>
<keyword id="KW-1185">Reference proteome</keyword>
<keyword id="KW-0687">Ribonucleoprotein</keyword>
<keyword id="KW-0689">Ribosomal protein</keyword>
<organism>
    <name type="scientific">Mycobacterium bovis (strain ATCC BAA-935 / AF2122/97)</name>
    <dbReference type="NCBI Taxonomy" id="233413"/>
    <lineage>
        <taxon>Bacteria</taxon>
        <taxon>Bacillati</taxon>
        <taxon>Actinomycetota</taxon>
        <taxon>Actinomycetes</taxon>
        <taxon>Mycobacteriales</taxon>
        <taxon>Mycobacteriaceae</taxon>
        <taxon>Mycobacterium</taxon>
        <taxon>Mycobacterium tuberculosis complex</taxon>
    </lineage>
</organism>
<proteinExistence type="inferred from homology"/>